<gene>
    <name evidence="3" type="ordered locus">YFR035W-A</name>
</gene>
<accession>P9WEJ4</accession>
<accession>A0AAT9JB48</accession>
<reference key="1">
    <citation type="journal article" date="1995" name="Nat. Genet.">
        <title>Analysis of the nucleotide sequence of chromosome VI from Saccharomyces cerevisiae.</title>
        <authorList>
            <person name="Murakami Y."/>
            <person name="Naitou M."/>
            <person name="Hagiwara H."/>
            <person name="Shibata T."/>
            <person name="Ozawa M."/>
            <person name="Sasanuma S."/>
            <person name="Sasanuma M."/>
            <person name="Tsuchiya Y."/>
            <person name="Soeda E."/>
            <person name="Yokoyama K."/>
            <person name="Yamazaki M."/>
            <person name="Tashiro H."/>
            <person name="Eki T."/>
        </authorList>
    </citation>
    <scope>NUCLEOTIDE SEQUENCE [LARGE SCALE GENOMIC DNA]</scope>
    <source>
        <strain>ATCC 204508 / S288c</strain>
    </source>
</reference>
<reference key="2">
    <citation type="journal article" date="2014" name="G3 (Bethesda)">
        <title>The reference genome sequence of Saccharomyces cerevisiae: Then and now.</title>
        <authorList>
            <person name="Engel S.R."/>
            <person name="Dietrich F.S."/>
            <person name="Fisk D.G."/>
            <person name="Binkley G."/>
            <person name="Balakrishnan R."/>
            <person name="Costanzo M.C."/>
            <person name="Dwight S.S."/>
            <person name="Hitz B.C."/>
            <person name="Karra K."/>
            <person name="Nash R.S."/>
            <person name="Weng S."/>
            <person name="Wong E.D."/>
            <person name="Lloyd P."/>
            <person name="Skrzypek M.S."/>
            <person name="Miyasato S.R."/>
            <person name="Simison M."/>
            <person name="Cherry J.M."/>
        </authorList>
    </citation>
    <scope>GENOME REANNOTATION</scope>
    <source>
        <strain>ATCC 204508 / S288c</strain>
    </source>
</reference>
<reference key="3">
    <citation type="journal article" date="2022" name="Genetics">
        <title>New data and collaborations at the Saccharomyces Genome Database: updated reference genome, alleles, and the Alliance of Genome Resources.</title>
        <authorList>
            <person name="Engel S.R."/>
            <person name="Wong E.D."/>
            <person name="Nash R.S."/>
            <person name="Aleksander S."/>
            <person name="Alexander M."/>
            <person name="Douglass E."/>
            <person name="Karra K."/>
            <person name="Miyasato S.R."/>
            <person name="Simison M."/>
            <person name="Skrzypek M.S."/>
            <person name="Weng S."/>
            <person name="Cherry J.M."/>
        </authorList>
    </citation>
    <scope>GENOME REANNOTATION</scope>
    <source>
        <strain>ATCC 204508 / S288c</strain>
    </source>
</reference>
<reference key="4">
    <citation type="journal article" date="2023" name="PLoS Biol.">
        <title>Biological factors and statistical limitations prevent detection of most noncanonical proteins by mass spectrometry.</title>
        <authorList>
            <person name="Wacholder A."/>
            <person name="Carvunis A.R."/>
        </authorList>
    </citation>
    <scope>IDENTIFICATION BY MASS SPECTROMETRY</scope>
</reference>
<organism>
    <name type="scientific">Saccharomyces cerevisiae (strain ATCC 204508 / S288c)</name>
    <name type="common">Baker's yeast</name>
    <dbReference type="NCBI Taxonomy" id="559292"/>
    <lineage>
        <taxon>Eukaryota</taxon>
        <taxon>Fungi</taxon>
        <taxon>Dikarya</taxon>
        <taxon>Ascomycota</taxon>
        <taxon>Saccharomycotina</taxon>
        <taxon>Saccharomycetes</taxon>
        <taxon>Saccharomycetales</taxon>
        <taxon>Saccharomycetaceae</taxon>
        <taxon>Saccharomyces</taxon>
    </lineage>
</organism>
<comment type="subcellular location">
    <subcellularLocation>
        <location evidence="1">Membrane</location>
        <topology evidence="1">Single-pass membrane protein</topology>
    </subcellularLocation>
</comment>
<evidence type="ECO:0000255" key="1"/>
<evidence type="ECO:0000305" key="2"/>
<evidence type="ECO:0000312" key="3">
    <source>
        <dbReference type="SGD" id="S000350095"/>
    </source>
</evidence>
<proteinExistence type="evidence at protein level"/>
<keyword id="KW-0472">Membrane</keyword>
<keyword id="KW-1185">Reference proteome</keyword>
<keyword id="KW-0812">Transmembrane</keyword>
<keyword id="KW-1133">Transmembrane helix</keyword>
<sequence>MNVPTAPTPNKHLNIPDLRFEKVFKKALHRELAPSSSLSRKAGVITKVVVRDVLLMPLLQSFVLSLALMGVKEWLSYIRLKGRTLGDRIRQRLFPI</sequence>
<dbReference type="EMBL" id="BK006940">
    <property type="protein sequence ID" value="DBA54438.1"/>
    <property type="molecule type" value="Genomic_DNA"/>
</dbReference>
<dbReference type="RefSeq" id="NP_001418067.1">
    <property type="nucleotide sequence ID" value="NM_001431138.1"/>
</dbReference>
<dbReference type="GeneID" id="91000622"/>
<dbReference type="SGD" id="S000350095">
    <property type="gene designation" value="YFR035W-A"/>
</dbReference>
<dbReference type="Proteomes" id="UP000002311">
    <property type="component" value="Chromosome VI"/>
</dbReference>
<dbReference type="GO" id="GO:0016020">
    <property type="term" value="C:membrane"/>
    <property type="evidence" value="ECO:0007669"/>
    <property type="project" value="UniProtKB-SubCell"/>
</dbReference>
<dbReference type="GO" id="GO:0140580">
    <property type="term" value="F:mitochondrion autophagosome adaptor activity"/>
    <property type="evidence" value="ECO:0007669"/>
    <property type="project" value="InterPro"/>
</dbReference>
<dbReference type="GO" id="GO:0000423">
    <property type="term" value="P:mitophagy"/>
    <property type="evidence" value="ECO:0007669"/>
    <property type="project" value="InterPro"/>
</dbReference>
<dbReference type="InterPro" id="IPR013898">
    <property type="entry name" value="Atg43"/>
</dbReference>
<dbReference type="PANTHER" id="PTHR38699">
    <property type="entry name" value="CHROMOSOME 1, WHOLE GENOME SHOTGUN SEQUENCE"/>
    <property type="match status" value="1"/>
</dbReference>
<dbReference type="PANTHER" id="PTHR38699:SF1">
    <property type="entry name" value="MITOPHAGY RECEPTOR ATG43"/>
    <property type="match status" value="1"/>
</dbReference>
<name>YF035_YEAST</name>
<protein>
    <recommendedName>
        <fullName evidence="2">Uncharacterized protein YFR035W-A</fullName>
    </recommendedName>
</protein>
<feature type="chain" id="PRO_0000461173" description="Uncharacterized protein YFR035W-A">
    <location>
        <begin position="1"/>
        <end position="96"/>
    </location>
</feature>
<feature type="transmembrane region" description="Helical" evidence="1">
    <location>
        <begin position="53"/>
        <end position="71"/>
    </location>
</feature>